<name>GRAP1_RAT</name>
<proteinExistence type="evidence at protein level"/>
<accession>Q9JHZ4</accession>
<accession>Q9JHZ3</accession>
<organism>
    <name type="scientific">Rattus norvegicus</name>
    <name type="common">Rat</name>
    <dbReference type="NCBI Taxonomy" id="10116"/>
    <lineage>
        <taxon>Eukaryota</taxon>
        <taxon>Metazoa</taxon>
        <taxon>Chordata</taxon>
        <taxon>Craniata</taxon>
        <taxon>Vertebrata</taxon>
        <taxon>Euteleostomi</taxon>
        <taxon>Mammalia</taxon>
        <taxon>Eutheria</taxon>
        <taxon>Euarchontoglires</taxon>
        <taxon>Glires</taxon>
        <taxon>Rodentia</taxon>
        <taxon>Myomorpha</taxon>
        <taxon>Muroidea</taxon>
        <taxon>Muridae</taxon>
        <taxon>Murinae</taxon>
        <taxon>Rattus</taxon>
    </lineage>
</organism>
<sequence length="837" mass="96074">MAQALSEEEFQRMQTQLLELRTNNYQLSDELRKNGVELSSLRQKVAYLDKEFSKAQKALSKSKKAQEVEVLLSEKEMLQAKLHSQEEDFRLQNSTLMAEFSKLCSQLEQLELENRQLKEGVPGAAGPHVDGELLRLQAENTALQKNMAALQERYGKEAVRPSAVSEGQGDPPGDVLPISLSPMPLAEVELKWEMEREEKKLLWEQLQGLESSKQAETSRLQEELAKLSEKLKKKQESFCRLQTEKETLFNDSRNKIEELQQRKEADLKAQLARTQKLQQELEAANQSLAELRDQRQGERLEHAAALRALQDQVSSQSADAQEQVEGLLAENNALRTSLAALEQIQTAKTQELNMLREQNTELAAELKHRQADYEELMGQKDDLNSQLQESLRANSRLLEQLQEMGQEKEQLIQDLQEARKSAEKRKVMLDELAMETLQEKSQHKEELGAVRLRHEKEMLGVRARYERELRELHEDKKRQEEELRGQIREEKARTRELENLQHTVEELQAQVHSMDGAKGWFERRLKEAEESLLQQEQEQEETLKQCREQHAAELKGKEEELQNVRDQLQQAQEERDGHVKTISNLKQEVKDTVDGQRILEKKGSAVLKDLKRQLHLERKRADKLQERLQEILTNSKSRTGLEELVLSEMNSPSRTQTGDSSSVSSFSYREILKEKESSAIPARSLSSSPQAQPPRPAELSDEEVAELFQRLAETQQEKWMLEEKVKHLEVSSASMAEDLCRKSAIIETYVMDSRIDVSVAAGHTDRSGLGSVLRDLVKPGDENLREMNKKLQNMLEEQLTKNMHLHKDMEVLSQEIVRLSKECVGSPDPDLEPGEAN</sequence>
<keyword id="KW-0007">Acetylation</keyword>
<keyword id="KW-0025">Alternative splicing</keyword>
<keyword id="KW-0966">Cell projection</keyword>
<keyword id="KW-0175">Coiled coil</keyword>
<keyword id="KW-0967">Endosome</keyword>
<keyword id="KW-0472">Membrane</keyword>
<keyword id="KW-0597">Phosphoprotein</keyword>
<keyword id="KW-0653">Protein transport</keyword>
<keyword id="KW-1185">Reference proteome</keyword>
<keyword id="KW-0770">Synapse</keyword>
<keyword id="KW-0813">Transport</keyword>
<feature type="initiator methionine" description="Removed" evidence="1">
    <location>
        <position position="1"/>
    </location>
</feature>
<feature type="chain" id="PRO_0000087583" description="GRIP1-associated protein 1">
    <location>
        <begin position="2"/>
        <end position="837"/>
    </location>
</feature>
<feature type="chain" id="PRO_0000441813" description="GRASP-1 C-terminal chain">
    <location>
        <begin position="595"/>
        <end position="837"/>
    </location>
</feature>
<feature type="region of interest" description="Disordered" evidence="4">
    <location>
        <begin position="161"/>
        <end position="180"/>
    </location>
</feature>
<feature type="region of interest" description="Disordered" evidence="4">
    <location>
        <begin position="555"/>
        <end position="577"/>
    </location>
</feature>
<feature type="region of interest" description="Disordered" evidence="4">
    <location>
        <begin position="647"/>
        <end position="666"/>
    </location>
</feature>
<feature type="region of interest" description="Disordered" evidence="4">
    <location>
        <begin position="677"/>
        <end position="702"/>
    </location>
</feature>
<feature type="coiled-coil region" evidence="3">
    <location>
        <begin position="4"/>
        <end position="158"/>
    </location>
</feature>
<feature type="coiled-coil region" evidence="3">
    <location>
        <begin position="204"/>
        <end position="637"/>
    </location>
</feature>
<feature type="coiled-coil region" evidence="3">
    <location>
        <begin position="697"/>
        <end position="731"/>
    </location>
</feature>
<feature type="coiled-coil region" evidence="3">
    <location>
        <begin position="781"/>
        <end position="810"/>
    </location>
</feature>
<feature type="compositionally biased region" description="Polar residues" evidence="4">
    <location>
        <begin position="648"/>
        <end position="666"/>
    </location>
</feature>
<feature type="compositionally biased region" description="Low complexity" evidence="4">
    <location>
        <begin position="678"/>
        <end position="690"/>
    </location>
</feature>
<feature type="site" description="Cleavage; by caspase-3" evidence="5">
    <location>
        <begin position="594"/>
        <end position="595"/>
    </location>
</feature>
<feature type="modified residue" description="N-acetylalanine" evidence="1">
    <location>
        <position position="2"/>
    </location>
</feature>
<feature type="modified residue" description="Phosphoserine" evidence="1">
    <location>
        <position position="651"/>
    </location>
</feature>
<feature type="modified residue" description="Phosphoserine" evidence="1">
    <location>
        <position position="662"/>
    </location>
</feature>
<feature type="modified residue" description="Phosphoserine" evidence="2">
    <location>
        <position position="664"/>
    </location>
</feature>
<feature type="modified residue" description="Phosphoserine" evidence="2">
    <location>
        <position position="665"/>
    </location>
</feature>
<feature type="modified residue" description="Phosphoserine" evidence="10">
    <location>
        <position position="684"/>
    </location>
</feature>
<feature type="modified residue" description="Phosphoserine" evidence="1">
    <location>
        <position position="686"/>
    </location>
</feature>
<feature type="modified residue" description="Phosphoserine" evidence="2">
    <location>
        <position position="687"/>
    </location>
</feature>
<feature type="modified residue" description="Phosphoserine" evidence="10">
    <location>
        <position position="688"/>
    </location>
</feature>
<feature type="modified residue" description="Phosphoserine" evidence="10">
    <location>
        <position position="826"/>
    </location>
</feature>
<feature type="splice variant" id="VSP_015706" description="In isoform 2." evidence="8">
    <location>
        <begin position="57"/>
        <end position="101"/>
    </location>
</feature>
<feature type="mutagenesis site" description="No in vitro cleavage by caspase-3; when associated with E-594. Results in loss of JNK activation; when associated with E-594." evidence="5 7">
    <original>D</original>
    <variation>E</variation>
    <location>
        <position position="591"/>
    </location>
</feature>
<feature type="mutagenesis site" description="No in vitro cleavage by caspase-3; when associated with E-591. Results in loss of JNK activation; when associated with E-591." evidence="5 7">
    <original>D</original>
    <variation>E</variation>
    <location>
        <position position="594"/>
    </location>
</feature>
<gene>
    <name type="primary">Gripap1</name>
    <name type="synonym">Grasp1</name>
</gene>
<evidence type="ECO:0000250" key="1">
    <source>
        <dbReference type="UniProtKB" id="Q4V328"/>
    </source>
</evidence>
<evidence type="ECO:0000250" key="2">
    <source>
        <dbReference type="UniProtKB" id="Q8VD04"/>
    </source>
</evidence>
<evidence type="ECO:0000255" key="3"/>
<evidence type="ECO:0000256" key="4">
    <source>
        <dbReference type="SAM" id="MobiDB-lite"/>
    </source>
</evidence>
<evidence type="ECO:0000269" key="5">
    <source>
    </source>
</evidence>
<evidence type="ECO:0000269" key="6">
    <source>
    </source>
</evidence>
<evidence type="ECO:0000269" key="7">
    <source>
    </source>
</evidence>
<evidence type="ECO:0000305" key="8"/>
<evidence type="ECO:0000305" key="9">
    <source>
    </source>
</evidence>
<evidence type="ECO:0007744" key="10">
    <source>
    </source>
</evidence>
<protein>
    <recommendedName>
        <fullName>GRIP1-associated protein 1</fullName>
        <shortName>GRASP-1</shortName>
    </recommendedName>
    <component>
        <recommendedName>
            <fullName evidence="9">GRASP-1 C-terminal chain</fullName>
        </recommendedName>
        <alternativeName>
            <fullName>30kDa C-terminus form</fullName>
        </alternativeName>
    </component>
</protein>
<reference key="1">
    <citation type="journal article" date="2000" name="Neuron">
        <title>GRASP-1: a neuronal RasGEF associated with the AMPA receptor/GRIP complex.</title>
        <authorList>
            <person name="Ye B."/>
            <person name="Liao D."/>
            <person name="Zhang X."/>
            <person name="Zhang P."/>
            <person name="Dong H."/>
            <person name="Huganir R.L."/>
        </authorList>
    </citation>
    <scope>NUCLEOTIDE SEQUENCE [MRNA]</scope>
    <scope>TISSUE SPECIFICITY</scope>
    <scope>INTERACTION WITH GRIP1; GRIP2 AND AMPA RECEPTORS</scope>
    <scope>CLEAVAGE BY CASPASE-3</scope>
    <scope>MUTAGENESIS OF ASP-591 AND ASP-594</scope>
    <source>
        <strain>Sprague-Dawley</strain>
        <tissue>Hippocampus</tissue>
    </source>
</reference>
<reference key="2">
    <citation type="journal article" date="2007" name="FEBS Lett.">
        <title>GRASP-1 is a neuronal scaffold protein for the JNK signaling pathway.</title>
        <authorList>
            <person name="Ye B."/>
            <person name="Yu W.P."/>
            <person name="Thomas G.M."/>
            <person name="Huganir R.L."/>
        </authorList>
    </citation>
    <scope>FUNCTION</scope>
    <scope>INTERACTION WITH MAPK8 AND MAP3K1</scope>
    <scope>CLEAVAGE BY CASPASE-3</scope>
</reference>
<reference key="3">
    <citation type="journal article" date="2010" name="PLoS Biol.">
        <title>Neuron specific Rab4 effector GRASP-1 coordinates membrane specialization and maturation of recycling endosomes.</title>
        <authorList>
            <person name="Hoogenraad C.C."/>
            <person name="Popa I."/>
            <person name="Futai K."/>
            <person name="Martinez-Sanchez E."/>
            <person name="Sanchez-Martinez E."/>
            <person name="Wulf P.S."/>
            <person name="van Vlijmen T."/>
            <person name="Dortland B.R."/>
            <person name="Oorschot V."/>
            <person name="Govers R."/>
            <person name="Monti M."/>
            <person name="Heck A.J."/>
            <person name="Sheng M."/>
            <person name="Klumperman J."/>
            <person name="Rehmann H."/>
            <person name="Jaarsma D."/>
            <person name="Kapitein L.C."/>
            <person name="van der Sluijs P."/>
        </authorList>
    </citation>
    <scope>FUNCTION</scope>
    <scope>INTERACTION WITH RAB4A AND STX12</scope>
    <scope>SUBCELLULAR LOCATION</scope>
    <scope>MUTAGENESIS OF ASP-591 AND ASP-594</scope>
</reference>
<reference key="4">
    <citation type="journal article" date="2012" name="Nat. Commun.">
        <title>Quantitative maps of protein phosphorylation sites across 14 different rat organs and tissues.</title>
        <authorList>
            <person name="Lundby A."/>
            <person name="Secher A."/>
            <person name="Lage K."/>
            <person name="Nordsborg N.B."/>
            <person name="Dmytriyev A."/>
            <person name="Lundby C."/>
            <person name="Olsen J.V."/>
        </authorList>
    </citation>
    <scope>PHOSPHORYLATION [LARGE SCALE ANALYSIS] AT SER-684; SER-688 AND SER-826</scope>
    <scope>IDENTIFICATION BY MASS SPECTROMETRY [LARGE SCALE ANALYSIS]</scope>
</reference>
<comment type="function">
    <text evidence="7">Regulates the endosomal recycling back to the neuronal plasma membrane, possibly by connecting early and late recycling endosomal domains and promoting segregation of recycling endosomes from early endosomal membranes. Involved in the localization of recycling endosomes to dendritic spines, thereby playing a role in the maintenance of dendritic spine morphology. Required for the activity-induced AMPA receptor recycling to dendrite membranes and for long-term potentiation and synaptic plasticity.</text>
</comment>
<comment type="function">
    <molecule>GRASP-1 C-terminal chain</molecule>
    <text evidence="6">Functions as a scaffold protein in neurons to facilitate MAP3K1/MEKK1-mediated activation of the JNK1 kinase by phosphorylation, possibly by bringing MAP3K1/MEKK1 and JNK1 in close proximity.</text>
</comment>
<comment type="subunit">
    <text evidence="5 6 7">Interacts with GRIP1, GRIP2 and AMPA receptors (PubMed:10896157). Interacts (via C-terminus) with MAPK8/JNK1 and with MAP3K1/MEKK1; the interaction promotes MAP3K1-mediated phosphorylation of MAPK8 (PubMed:17761173). Interacts (via N-terminus) with RAB4A (in GTP-bound form) (PubMed:20098723). Interacts (via C-terminus) with STX12 (PubMed:20098723).</text>
</comment>
<comment type="subcellular location">
    <subcellularLocation>
        <location evidence="7">Early endosome membrane</location>
        <topology evidence="8">Peripheral membrane protein</topology>
    </subcellularLocation>
    <subcellularLocation>
        <location evidence="7">Recycling endosome membrane</location>
        <topology evidence="8">Peripheral membrane protein</topology>
    </subcellularLocation>
    <subcellularLocation>
        <location evidence="7">Cell projection</location>
        <location evidence="7">Axon</location>
    </subcellularLocation>
    <subcellularLocation>
        <location evidence="7">Cell projection</location>
        <location evidence="7">Dendrite</location>
    </subcellularLocation>
    <subcellularLocation>
        <location evidence="7">Synapse</location>
    </subcellularLocation>
    <text evidence="7">Localizes to recycling endosomal tubules that are emanating from early endosomes.</text>
</comment>
<comment type="alternative products">
    <event type="alternative splicing"/>
    <isoform>
        <id>Q9JHZ4-1</id>
        <name>1</name>
        <name>long form</name>
        <sequence type="displayed"/>
    </isoform>
    <isoform>
        <id>Q9JHZ4-2</id>
        <name>2</name>
        <name>short form</name>
        <sequence type="described" ref="VSP_015706"/>
    </isoform>
</comment>
<comment type="tissue specificity">
    <text evidence="5">Expressed in the central nervous system; especially in neurons.</text>
</comment>
<comment type="PTM">
    <text evidence="5 6">Proteolytically cleaved by caspase-3 (PubMed:10896157). A minor C-terminal proteolytic fragment of 30 kDa is produced (PubMed:10896157). Proteolytic cleavage is required for JNK signaling activation (PubMed:17761173).</text>
</comment>
<dbReference type="EMBL" id="AF274057">
    <property type="protein sequence ID" value="AAF82298.1"/>
    <property type="molecule type" value="mRNA"/>
</dbReference>
<dbReference type="EMBL" id="AF274058">
    <property type="protein sequence ID" value="AAF82299.1"/>
    <property type="molecule type" value="mRNA"/>
</dbReference>
<dbReference type="RefSeq" id="NP_446259.1">
    <molecule id="Q9JHZ4-1"/>
    <property type="nucleotide sequence ID" value="NM_053807.2"/>
</dbReference>
<dbReference type="RefSeq" id="XP_038955332.1">
    <molecule id="Q9JHZ4-2"/>
    <property type="nucleotide sequence ID" value="XM_039099404.2"/>
</dbReference>
<dbReference type="SMR" id="Q9JHZ4"/>
<dbReference type="BioGRID" id="250467">
    <property type="interactions" value="1"/>
</dbReference>
<dbReference type="CORUM" id="Q9JHZ4"/>
<dbReference type="FunCoup" id="Q9JHZ4">
    <property type="interactions" value="3952"/>
</dbReference>
<dbReference type="IntAct" id="Q9JHZ4">
    <property type="interactions" value="1"/>
</dbReference>
<dbReference type="MINT" id="Q9JHZ4"/>
<dbReference type="STRING" id="10116.ENSRNOP00000012646"/>
<dbReference type="iPTMnet" id="Q9JHZ4"/>
<dbReference type="PhosphoSitePlus" id="Q9JHZ4"/>
<dbReference type="jPOST" id="Q9JHZ4"/>
<dbReference type="PaxDb" id="10116-ENSRNOP00000012646"/>
<dbReference type="PeptideAtlas" id="Q9JHZ4"/>
<dbReference type="Ensembl" id="ENSRNOT00000012646.8">
    <molecule id="Q9JHZ4-1"/>
    <property type="protein sequence ID" value="ENSRNOP00000012646.7"/>
    <property type="gene ID" value="ENSRNOG00000009071.8"/>
</dbReference>
<dbReference type="Ensembl" id="ENSRNOT00000111277.1">
    <molecule id="Q9JHZ4-2"/>
    <property type="protein sequence ID" value="ENSRNOP00000085406.1"/>
    <property type="gene ID" value="ENSRNOG00000009071.8"/>
</dbReference>
<dbReference type="GeneID" id="116493"/>
<dbReference type="KEGG" id="rno:116493"/>
<dbReference type="UCSC" id="RGD:621249">
    <molecule id="Q9JHZ4-1"/>
    <property type="organism name" value="rat"/>
</dbReference>
<dbReference type="AGR" id="RGD:621249"/>
<dbReference type="CTD" id="56850"/>
<dbReference type="RGD" id="621249">
    <property type="gene designation" value="Gripap1"/>
</dbReference>
<dbReference type="eggNOG" id="ENOG502QTUD">
    <property type="taxonomic scope" value="Eukaryota"/>
</dbReference>
<dbReference type="GeneTree" id="ENSGT00720000108868"/>
<dbReference type="HOGENOM" id="CLU_019728_1_0_1"/>
<dbReference type="InParanoid" id="Q9JHZ4"/>
<dbReference type="OMA" id="FLLVQEQ"/>
<dbReference type="OrthoDB" id="6269447at2759"/>
<dbReference type="PhylomeDB" id="Q9JHZ4"/>
<dbReference type="TreeFam" id="TF329006"/>
<dbReference type="PRO" id="PR:Q9JHZ4"/>
<dbReference type="Proteomes" id="UP000002494">
    <property type="component" value="Chromosome X"/>
</dbReference>
<dbReference type="Bgee" id="ENSRNOG00000009071">
    <property type="expression patterns" value="Expressed in frontal cortex and 20 other cell types or tissues"/>
</dbReference>
<dbReference type="GO" id="GO:0030424">
    <property type="term" value="C:axon"/>
    <property type="evidence" value="ECO:0007669"/>
    <property type="project" value="UniProtKB-SubCell"/>
</dbReference>
<dbReference type="GO" id="GO:0005829">
    <property type="term" value="C:cytosol"/>
    <property type="evidence" value="ECO:0007669"/>
    <property type="project" value="Ensembl"/>
</dbReference>
<dbReference type="GO" id="GO:0030425">
    <property type="term" value="C:dendrite"/>
    <property type="evidence" value="ECO:0000314"/>
    <property type="project" value="RGD"/>
</dbReference>
<dbReference type="GO" id="GO:0098998">
    <property type="term" value="C:extrinsic component of postsynaptic early endosome membrane"/>
    <property type="evidence" value="ECO:0000314"/>
    <property type="project" value="SynGO"/>
</dbReference>
<dbReference type="GO" id="GO:0098978">
    <property type="term" value="C:glutamatergic synapse"/>
    <property type="evidence" value="ECO:0000314"/>
    <property type="project" value="SynGO"/>
</dbReference>
<dbReference type="GO" id="GO:0043025">
    <property type="term" value="C:neuronal cell body"/>
    <property type="evidence" value="ECO:0000314"/>
    <property type="project" value="RGD"/>
</dbReference>
<dbReference type="GO" id="GO:0005654">
    <property type="term" value="C:nucleoplasm"/>
    <property type="evidence" value="ECO:0007669"/>
    <property type="project" value="Ensembl"/>
</dbReference>
<dbReference type="GO" id="GO:0042734">
    <property type="term" value="C:presynaptic membrane"/>
    <property type="evidence" value="ECO:0000314"/>
    <property type="project" value="RGD"/>
</dbReference>
<dbReference type="GO" id="GO:0055038">
    <property type="term" value="C:recycling endosome membrane"/>
    <property type="evidence" value="ECO:0007669"/>
    <property type="project" value="UniProtKB-SubCell"/>
</dbReference>
<dbReference type="GO" id="GO:0098685">
    <property type="term" value="C:Schaffer collateral - CA1 synapse"/>
    <property type="evidence" value="ECO:0000266"/>
    <property type="project" value="RGD"/>
</dbReference>
<dbReference type="GO" id="GO:0005085">
    <property type="term" value="F:guanyl-nucleotide exchange factor activity"/>
    <property type="evidence" value="ECO:0000315"/>
    <property type="project" value="RGD"/>
</dbReference>
<dbReference type="GO" id="GO:0042802">
    <property type="term" value="F:identical protein binding"/>
    <property type="evidence" value="ECO:0000266"/>
    <property type="project" value="RGD"/>
</dbReference>
<dbReference type="GO" id="GO:0035255">
    <property type="term" value="F:ionotropic glutamate receptor binding"/>
    <property type="evidence" value="ECO:0000353"/>
    <property type="project" value="RGD"/>
</dbReference>
<dbReference type="GO" id="GO:1903828">
    <property type="term" value="P:negative regulation of protein localization"/>
    <property type="evidence" value="ECO:0000315"/>
    <property type="project" value="RGD"/>
</dbReference>
<dbReference type="GO" id="GO:1903910">
    <property type="term" value="P:negative regulation of receptor clustering"/>
    <property type="evidence" value="ECO:0000315"/>
    <property type="project" value="RGD"/>
</dbReference>
<dbReference type="GO" id="GO:0015031">
    <property type="term" value="P:protein transport"/>
    <property type="evidence" value="ECO:0007669"/>
    <property type="project" value="UniProtKB-KW"/>
</dbReference>
<dbReference type="GO" id="GO:0099152">
    <property type="term" value="P:regulation of neurotransmitter receptor transport, endosome to postsynaptic membrane"/>
    <property type="evidence" value="ECO:0000314"/>
    <property type="project" value="SynGO"/>
</dbReference>
<dbReference type="GO" id="GO:0099158">
    <property type="term" value="P:regulation of recycling endosome localization within postsynapse"/>
    <property type="evidence" value="ECO:0000314"/>
    <property type="project" value="SynGO"/>
</dbReference>
<dbReference type="InterPro" id="IPR026204">
    <property type="entry name" value="GRIPAP1"/>
</dbReference>
<dbReference type="PANTHER" id="PTHR18978">
    <property type="entry name" value="GRIP-1 ASSOCIATED PROTEIN 1"/>
    <property type="match status" value="1"/>
</dbReference>
<dbReference type="PANTHER" id="PTHR18978:SF1">
    <property type="entry name" value="GRIP1-ASSOCIATED PROTEIN 1"/>
    <property type="match status" value="1"/>
</dbReference>